<comment type="catalytic activity">
    <reaction>
        <text>acetyl-CoA + phosphate = acetyl phosphate + CoA</text>
        <dbReference type="Rhea" id="RHEA:19521"/>
        <dbReference type="ChEBI" id="CHEBI:22191"/>
        <dbReference type="ChEBI" id="CHEBI:43474"/>
        <dbReference type="ChEBI" id="CHEBI:57287"/>
        <dbReference type="ChEBI" id="CHEBI:57288"/>
        <dbReference type="EC" id="2.3.1.8"/>
    </reaction>
</comment>
<comment type="pathway">
    <text>Metabolic intermediate biosynthesis; acetyl-CoA biosynthesis; acetyl-CoA from acetate: step 2/2.</text>
</comment>
<comment type="subcellular location">
    <subcellularLocation>
        <location evidence="1">Cytoplasm</location>
    </subcellularLocation>
</comment>
<comment type="similarity">
    <text evidence="1">Belongs to the phosphate acetyltransferase and butyryltransferase family.</text>
</comment>
<keyword id="KW-0002">3D-structure</keyword>
<keyword id="KW-0012">Acyltransferase</keyword>
<keyword id="KW-0963">Cytoplasm</keyword>
<keyword id="KW-1185">Reference proteome</keyword>
<keyword id="KW-0808">Transferase</keyword>
<accession>O83132</accession>
<gene>
    <name type="primary">pta</name>
    <name type="ordered locus">TP_0094</name>
</gene>
<protein>
    <recommendedName>
        <fullName>Phosphate acetyltransferase</fullName>
        <ecNumber>2.3.1.8</ecNumber>
    </recommendedName>
    <alternativeName>
        <fullName>Phosphotransacetylase</fullName>
    </alternativeName>
</protein>
<sequence>MTFVESMQRRAVLAQKRLVLPEACEQRTLEAARLIVFRNIAAKVFLVGCERDIKNTADRCGIDLTDMVVIDPSVSKHRDQFAERYFQKRKHKGISLAQAAEDMRDPLRFAAMMLDQGHADAMVAGAENTTARVLRAGLTIIGTLPSVKTASSCFVMDTNNPRLGGTRGLFIFSDCAVIPTPTAEQLADIACSAAESCRTFIGEEPTVALLSYSTKGSGGDSDENILRVREAVRILHERRVDFTFDGELQLDAALVPKITEKKAPHSPITGKVNTLVFPDLSSGNIGYKLVQRLSDADAYGPFLQGFAKPLSDLSRGCSVEDIVAACAVTLVQSNGR</sequence>
<proteinExistence type="evidence at protein level"/>
<reference key="1">
    <citation type="journal article" date="1998" name="Science">
        <title>Complete genome sequence of Treponema pallidum, the syphilis spirochete.</title>
        <authorList>
            <person name="Fraser C.M."/>
            <person name="Norris S.J."/>
            <person name="Weinstock G.M."/>
            <person name="White O."/>
            <person name="Sutton G.G."/>
            <person name="Dodson R.J."/>
            <person name="Gwinn M.L."/>
            <person name="Hickey E.K."/>
            <person name="Clayton R.A."/>
            <person name="Ketchum K.A."/>
            <person name="Sodergren E."/>
            <person name="Hardham J.M."/>
            <person name="McLeod M.P."/>
            <person name="Salzberg S.L."/>
            <person name="Peterson J.D."/>
            <person name="Khalak H.G."/>
            <person name="Richardson D.L."/>
            <person name="Howell J.K."/>
            <person name="Chidambaram M."/>
            <person name="Utterback T.R."/>
            <person name="McDonald L.A."/>
            <person name="Artiach P."/>
            <person name="Bowman C."/>
            <person name="Cotton M.D."/>
            <person name="Fujii C."/>
            <person name="Garland S.A."/>
            <person name="Hatch B."/>
            <person name="Horst K."/>
            <person name="Roberts K.M."/>
            <person name="Sandusky M."/>
            <person name="Weidman J.F."/>
            <person name="Smith H.O."/>
            <person name="Venter J.C."/>
        </authorList>
    </citation>
    <scope>NUCLEOTIDE SEQUENCE [LARGE SCALE GENOMIC DNA]</scope>
    <source>
        <strain>Nichols</strain>
    </source>
</reference>
<dbReference type="EC" id="2.3.1.8"/>
<dbReference type="EMBL" id="AE000520">
    <property type="protein sequence ID" value="AAC65090.1"/>
    <property type="molecule type" value="Genomic_DNA"/>
</dbReference>
<dbReference type="PIR" id="B71366">
    <property type="entry name" value="B71366"/>
</dbReference>
<dbReference type="RefSeq" id="WP_010881543.1">
    <property type="nucleotide sequence ID" value="NC_021490.2"/>
</dbReference>
<dbReference type="PDB" id="8FIR">
    <property type="method" value="X-ray"/>
    <property type="resolution" value="1.95 A"/>
    <property type="chains" value="A/B=1-336"/>
</dbReference>
<dbReference type="PDBsum" id="8FIR"/>
<dbReference type="SMR" id="O83132"/>
<dbReference type="IntAct" id="O83132">
    <property type="interactions" value="22"/>
</dbReference>
<dbReference type="STRING" id="243276.TP_0094"/>
<dbReference type="EnsemblBacteria" id="AAC65090">
    <property type="protein sequence ID" value="AAC65090"/>
    <property type="gene ID" value="TP_0094"/>
</dbReference>
<dbReference type="GeneID" id="93875888"/>
<dbReference type="KEGG" id="tpa:TP_0094"/>
<dbReference type="KEGG" id="tpw:TPANIC_0094"/>
<dbReference type="eggNOG" id="COG0280">
    <property type="taxonomic scope" value="Bacteria"/>
</dbReference>
<dbReference type="HOGENOM" id="CLU_019723_0_1_12"/>
<dbReference type="OrthoDB" id="9805787at2"/>
<dbReference type="UniPathway" id="UPA00340">
    <property type="reaction ID" value="UER00459"/>
</dbReference>
<dbReference type="Proteomes" id="UP000000811">
    <property type="component" value="Chromosome"/>
</dbReference>
<dbReference type="GO" id="GO:0005737">
    <property type="term" value="C:cytoplasm"/>
    <property type="evidence" value="ECO:0007669"/>
    <property type="project" value="UniProtKB-SubCell"/>
</dbReference>
<dbReference type="GO" id="GO:0008959">
    <property type="term" value="F:phosphate acetyltransferase activity"/>
    <property type="evidence" value="ECO:0007669"/>
    <property type="project" value="UniProtKB-EC"/>
</dbReference>
<dbReference type="GO" id="GO:0006085">
    <property type="term" value="P:acetyl-CoA biosynthetic process"/>
    <property type="evidence" value="ECO:0007669"/>
    <property type="project" value="UniProtKB-UniPathway"/>
</dbReference>
<dbReference type="Gene3D" id="3.40.50.10950">
    <property type="match status" value="1"/>
</dbReference>
<dbReference type="Gene3D" id="3.40.50.10750">
    <property type="entry name" value="Isocitrate/Isopropylmalate dehydrogenase-like"/>
    <property type="match status" value="1"/>
</dbReference>
<dbReference type="InterPro" id="IPR012147">
    <property type="entry name" value="P_Ac_Bu_trans"/>
</dbReference>
<dbReference type="InterPro" id="IPR004614">
    <property type="entry name" value="P_AcTrfase"/>
</dbReference>
<dbReference type="InterPro" id="IPR042113">
    <property type="entry name" value="P_AcTrfase_dom1"/>
</dbReference>
<dbReference type="InterPro" id="IPR042112">
    <property type="entry name" value="P_AcTrfase_dom2"/>
</dbReference>
<dbReference type="InterPro" id="IPR050500">
    <property type="entry name" value="Phos_Acetyltrans/Butyryltrans"/>
</dbReference>
<dbReference type="InterPro" id="IPR002505">
    <property type="entry name" value="PTA_PTB"/>
</dbReference>
<dbReference type="NCBIfam" id="NF007233">
    <property type="entry name" value="PRK09653.1"/>
    <property type="match status" value="1"/>
</dbReference>
<dbReference type="NCBIfam" id="TIGR00651">
    <property type="entry name" value="pta"/>
    <property type="match status" value="1"/>
</dbReference>
<dbReference type="PANTHER" id="PTHR43356">
    <property type="entry name" value="PHOSPHATE ACETYLTRANSFERASE"/>
    <property type="match status" value="1"/>
</dbReference>
<dbReference type="PANTHER" id="PTHR43356:SF3">
    <property type="entry name" value="PHOSPHATE ACETYLTRANSFERASE"/>
    <property type="match status" value="1"/>
</dbReference>
<dbReference type="Pfam" id="PF01515">
    <property type="entry name" value="PTA_PTB"/>
    <property type="match status" value="1"/>
</dbReference>
<dbReference type="PIRSF" id="PIRSF000428">
    <property type="entry name" value="P_Ac_trans"/>
    <property type="match status" value="1"/>
</dbReference>
<dbReference type="SUPFAM" id="SSF53659">
    <property type="entry name" value="Isocitrate/Isopropylmalate dehydrogenase-like"/>
    <property type="match status" value="1"/>
</dbReference>
<feature type="chain" id="PRO_0000179150" description="Phosphate acetyltransferase">
    <location>
        <begin position="1"/>
        <end position="336"/>
    </location>
</feature>
<feature type="helix" evidence="2">
    <location>
        <begin position="3"/>
        <end position="14"/>
    </location>
</feature>
<feature type="strand" evidence="2">
    <location>
        <begin position="17"/>
        <end position="21"/>
    </location>
</feature>
<feature type="helix" evidence="2">
    <location>
        <begin position="26"/>
        <end position="38"/>
    </location>
</feature>
<feature type="strand" evidence="2">
    <location>
        <begin position="42"/>
        <end position="48"/>
    </location>
</feature>
<feature type="helix" evidence="2">
    <location>
        <begin position="50"/>
        <end position="60"/>
    </location>
</feature>
<feature type="strand" evidence="2">
    <location>
        <begin position="67"/>
        <end position="70"/>
    </location>
</feature>
<feature type="turn" evidence="2">
    <location>
        <begin position="72"/>
        <end position="74"/>
    </location>
</feature>
<feature type="helix" evidence="2">
    <location>
        <begin position="78"/>
        <end position="89"/>
    </location>
</feature>
<feature type="helix" evidence="2">
    <location>
        <begin position="90"/>
        <end position="92"/>
    </location>
</feature>
<feature type="helix" evidence="2">
    <location>
        <begin position="96"/>
        <end position="102"/>
    </location>
</feature>
<feature type="helix" evidence="2">
    <location>
        <begin position="106"/>
        <end position="115"/>
    </location>
</feature>
<feature type="strand" evidence="2">
    <location>
        <begin position="120"/>
        <end position="124"/>
    </location>
</feature>
<feature type="strand" evidence="2">
    <location>
        <begin position="126"/>
        <end position="128"/>
    </location>
</feature>
<feature type="helix" evidence="2">
    <location>
        <begin position="130"/>
        <end position="140"/>
    </location>
</feature>
<feature type="strand" evidence="2">
    <location>
        <begin position="151"/>
        <end position="157"/>
    </location>
</feature>
<feature type="strand" evidence="2">
    <location>
        <begin position="169"/>
        <end position="177"/>
    </location>
</feature>
<feature type="helix" evidence="2">
    <location>
        <begin position="183"/>
        <end position="200"/>
    </location>
</feature>
<feature type="strand" evidence="2">
    <location>
        <begin position="206"/>
        <end position="210"/>
    </location>
</feature>
<feature type="turn" evidence="2">
    <location>
        <begin position="215"/>
        <end position="218"/>
    </location>
</feature>
<feature type="helix" evidence="2">
    <location>
        <begin position="223"/>
        <end position="238"/>
    </location>
</feature>
<feature type="strand" evidence="2">
    <location>
        <begin position="241"/>
        <end position="248"/>
    </location>
</feature>
<feature type="helix" evidence="2">
    <location>
        <begin position="250"/>
        <end position="254"/>
    </location>
</feature>
<feature type="helix" evidence="2">
    <location>
        <begin position="256"/>
        <end position="262"/>
    </location>
</feature>
<feature type="turn" evidence="2">
    <location>
        <begin position="267"/>
        <end position="271"/>
    </location>
</feature>
<feature type="strand" evidence="2">
    <location>
        <begin position="274"/>
        <end position="276"/>
    </location>
</feature>
<feature type="helix" evidence="2">
    <location>
        <begin position="280"/>
        <end position="292"/>
    </location>
</feature>
<feature type="strand" evidence="2">
    <location>
        <begin position="293"/>
        <end position="295"/>
    </location>
</feature>
<feature type="strand" evidence="2">
    <location>
        <begin position="297"/>
        <end position="308"/>
    </location>
</feature>
<feature type="strand" evidence="2">
    <location>
        <begin position="310"/>
        <end position="312"/>
    </location>
</feature>
<feature type="helix" evidence="2">
    <location>
        <begin position="319"/>
        <end position="332"/>
    </location>
</feature>
<organism>
    <name type="scientific">Treponema pallidum (strain Nichols)</name>
    <dbReference type="NCBI Taxonomy" id="243276"/>
    <lineage>
        <taxon>Bacteria</taxon>
        <taxon>Pseudomonadati</taxon>
        <taxon>Spirochaetota</taxon>
        <taxon>Spirochaetia</taxon>
        <taxon>Spirochaetales</taxon>
        <taxon>Treponemataceae</taxon>
        <taxon>Treponema</taxon>
    </lineage>
</organism>
<name>PTAS_TREPA</name>
<evidence type="ECO:0000305" key="1"/>
<evidence type="ECO:0007829" key="2">
    <source>
        <dbReference type="PDB" id="8FIR"/>
    </source>
</evidence>